<name>UVRC_FRATW</name>
<evidence type="ECO:0000255" key="1">
    <source>
        <dbReference type="HAMAP-Rule" id="MF_00203"/>
    </source>
</evidence>
<accession>A4IZ40</accession>
<organism>
    <name type="scientific">Francisella tularensis subsp. tularensis (strain WY96-3418)</name>
    <dbReference type="NCBI Taxonomy" id="418136"/>
    <lineage>
        <taxon>Bacteria</taxon>
        <taxon>Pseudomonadati</taxon>
        <taxon>Pseudomonadota</taxon>
        <taxon>Gammaproteobacteria</taxon>
        <taxon>Thiotrichales</taxon>
        <taxon>Francisellaceae</taxon>
        <taxon>Francisella</taxon>
    </lineage>
</organism>
<feature type="chain" id="PRO_1000077790" description="UvrABC system protein C">
    <location>
        <begin position="1"/>
        <end position="612"/>
    </location>
</feature>
<feature type="domain" description="GIY-YIG" evidence="1">
    <location>
        <begin position="20"/>
        <end position="98"/>
    </location>
</feature>
<feature type="domain" description="UVR" evidence="1">
    <location>
        <begin position="208"/>
        <end position="243"/>
    </location>
</feature>
<proteinExistence type="inferred from homology"/>
<reference key="1">
    <citation type="journal article" date="2007" name="PLoS ONE">
        <title>Complete genomic characterization of a pathogenic A.II strain of Francisella tularensis subspecies tularensis.</title>
        <authorList>
            <person name="Beckstrom-Sternberg S.M."/>
            <person name="Auerbach R.K."/>
            <person name="Godbole S."/>
            <person name="Pearson J.V."/>
            <person name="Beckstrom-Sternberg J.S."/>
            <person name="Deng Z."/>
            <person name="Munk C."/>
            <person name="Kubota K."/>
            <person name="Zhou Y."/>
            <person name="Bruce D."/>
            <person name="Noronha J."/>
            <person name="Scheuermann R.H."/>
            <person name="Wang A."/>
            <person name="Wei X."/>
            <person name="Wang J."/>
            <person name="Hao J."/>
            <person name="Wagner D.M."/>
            <person name="Brettin T.S."/>
            <person name="Brown N."/>
            <person name="Gilna P."/>
            <person name="Keim P.S."/>
        </authorList>
    </citation>
    <scope>NUCLEOTIDE SEQUENCE [LARGE SCALE GENOMIC DNA]</scope>
    <source>
        <strain>WY96-3418</strain>
    </source>
</reference>
<gene>
    <name evidence="1" type="primary">uvrC</name>
    <name type="ordered locus">FTW_1461</name>
</gene>
<comment type="function">
    <text evidence="1">The UvrABC repair system catalyzes the recognition and processing of DNA lesions. UvrC both incises the 5' and 3' sides of the lesion. The N-terminal half is responsible for the 3' incision and the C-terminal half is responsible for the 5' incision.</text>
</comment>
<comment type="subunit">
    <text evidence="1">Interacts with UvrB in an incision complex.</text>
</comment>
<comment type="subcellular location">
    <subcellularLocation>
        <location evidence="1">Cytoplasm</location>
    </subcellularLocation>
</comment>
<comment type="similarity">
    <text evidence="1">Belongs to the UvrC family.</text>
</comment>
<protein>
    <recommendedName>
        <fullName evidence="1">UvrABC system protein C</fullName>
        <shortName evidence="1">Protein UvrC</shortName>
    </recommendedName>
    <alternativeName>
        <fullName evidence="1">Excinuclease ABC subunit C</fullName>
    </alternativeName>
</protein>
<keyword id="KW-0963">Cytoplasm</keyword>
<keyword id="KW-0227">DNA damage</keyword>
<keyword id="KW-0228">DNA excision</keyword>
<keyword id="KW-0234">DNA repair</keyword>
<keyword id="KW-0267">Excision nuclease</keyword>
<keyword id="KW-0742">SOS response</keyword>
<sequence>MIVDNSKDFDLKSFLANLTTHSGVYRMLDKHGEIIYVGKAKNLKNRVNSYFSKGAKDSKTLMMVEQIARIEITITPSDYEAYLLENNLIKQHRPKYNILFKDDKSYPYLVISRDKFPRVSFYRGKSAYKKGQCFGPYVSISSVKNTLNTIQKIFPIRQCENSYYKSRVRPCLQYQIKRCLAPCVGLVSQQQYDEQLAILKKFLAGKFSSVLEEISAKMYQASEDMEYEKAQVYRDQLVVLRKLQQQQIVDIQEDKTFDVIGIYMQDSYASIALLQIQNGDVVADRHWSIDAKGQDKTSIMHAFLSHFYLGDEIRNIWPKNIILSKVEFADITDLMNSISQKIGQAINWIIAPAADNLKWLKLAEVNARQKLNIYTSSKSQYQKRLESLKEFLELEKDIKRIECFDISHFQGEATIASCVVYTDDGEDRKSHRRYNIKDIKSGDDYAAIHQAVSRRVSSGLEADNLPDVMIIDGGKGQIHQAEAVFREYGIQDKVQIVSLGKGVERISGKEKIYKGFDDTEYTLDEHNPGFLLLRQVRDSAHDHAIKGQRKKVSANRQSSIIEEIEGVGPKRRKALMMYFGGWQELSRASVDEIAKVKGISKKLAQEIWECFH</sequence>
<dbReference type="EMBL" id="CP000608">
    <property type="protein sequence ID" value="ABO47191.1"/>
    <property type="molecule type" value="Genomic_DNA"/>
</dbReference>
<dbReference type="RefSeq" id="WP_003026730.1">
    <property type="nucleotide sequence ID" value="NC_009257.1"/>
</dbReference>
<dbReference type="SMR" id="A4IZ40"/>
<dbReference type="KEGG" id="ftw:FTW_1461"/>
<dbReference type="HOGENOM" id="CLU_014841_3_0_6"/>
<dbReference type="GO" id="GO:0005737">
    <property type="term" value="C:cytoplasm"/>
    <property type="evidence" value="ECO:0007669"/>
    <property type="project" value="UniProtKB-SubCell"/>
</dbReference>
<dbReference type="GO" id="GO:0009380">
    <property type="term" value="C:excinuclease repair complex"/>
    <property type="evidence" value="ECO:0007669"/>
    <property type="project" value="InterPro"/>
</dbReference>
<dbReference type="GO" id="GO:0003677">
    <property type="term" value="F:DNA binding"/>
    <property type="evidence" value="ECO:0007669"/>
    <property type="project" value="UniProtKB-UniRule"/>
</dbReference>
<dbReference type="GO" id="GO:0009381">
    <property type="term" value="F:excinuclease ABC activity"/>
    <property type="evidence" value="ECO:0007669"/>
    <property type="project" value="UniProtKB-UniRule"/>
</dbReference>
<dbReference type="GO" id="GO:0006289">
    <property type="term" value="P:nucleotide-excision repair"/>
    <property type="evidence" value="ECO:0007669"/>
    <property type="project" value="UniProtKB-UniRule"/>
</dbReference>
<dbReference type="GO" id="GO:0009432">
    <property type="term" value="P:SOS response"/>
    <property type="evidence" value="ECO:0007669"/>
    <property type="project" value="UniProtKB-UniRule"/>
</dbReference>
<dbReference type="CDD" id="cd10434">
    <property type="entry name" value="GIY-YIG_UvrC_Cho"/>
    <property type="match status" value="1"/>
</dbReference>
<dbReference type="FunFam" id="3.30.420.340:FF:000001">
    <property type="entry name" value="UvrABC system protein C"/>
    <property type="match status" value="1"/>
</dbReference>
<dbReference type="FunFam" id="3.40.1440.10:FF:000001">
    <property type="entry name" value="UvrABC system protein C"/>
    <property type="match status" value="1"/>
</dbReference>
<dbReference type="Gene3D" id="1.10.150.20">
    <property type="entry name" value="5' to 3' exonuclease, C-terminal subdomain"/>
    <property type="match status" value="1"/>
</dbReference>
<dbReference type="Gene3D" id="3.40.1440.10">
    <property type="entry name" value="GIY-YIG endonuclease"/>
    <property type="match status" value="1"/>
</dbReference>
<dbReference type="Gene3D" id="4.10.860.10">
    <property type="entry name" value="UVR domain"/>
    <property type="match status" value="1"/>
</dbReference>
<dbReference type="Gene3D" id="3.30.420.340">
    <property type="entry name" value="UvrC, RNAse H endonuclease domain"/>
    <property type="match status" value="1"/>
</dbReference>
<dbReference type="HAMAP" id="MF_00203">
    <property type="entry name" value="UvrC"/>
    <property type="match status" value="1"/>
</dbReference>
<dbReference type="InterPro" id="IPR000305">
    <property type="entry name" value="GIY-YIG_endonuc"/>
</dbReference>
<dbReference type="InterPro" id="IPR035901">
    <property type="entry name" value="GIY-YIG_endonuc_sf"/>
</dbReference>
<dbReference type="InterPro" id="IPR047296">
    <property type="entry name" value="GIY-YIG_UvrC_Cho"/>
</dbReference>
<dbReference type="InterPro" id="IPR010994">
    <property type="entry name" value="RuvA_2-like"/>
</dbReference>
<dbReference type="InterPro" id="IPR001943">
    <property type="entry name" value="UVR_dom"/>
</dbReference>
<dbReference type="InterPro" id="IPR036876">
    <property type="entry name" value="UVR_dom_sf"/>
</dbReference>
<dbReference type="InterPro" id="IPR050066">
    <property type="entry name" value="UvrABC_protein_C"/>
</dbReference>
<dbReference type="InterPro" id="IPR004791">
    <property type="entry name" value="UvrC"/>
</dbReference>
<dbReference type="InterPro" id="IPR001162">
    <property type="entry name" value="UvrC_RNase_H_dom"/>
</dbReference>
<dbReference type="InterPro" id="IPR038476">
    <property type="entry name" value="UvrC_RNase_H_dom_sf"/>
</dbReference>
<dbReference type="NCBIfam" id="TIGR00194">
    <property type="entry name" value="uvrC"/>
    <property type="match status" value="1"/>
</dbReference>
<dbReference type="PANTHER" id="PTHR30562:SF1">
    <property type="entry name" value="UVRABC SYSTEM PROTEIN C"/>
    <property type="match status" value="1"/>
</dbReference>
<dbReference type="PANTHER" id="PTHR30562">
    <property type="entry name" value="UVRC/OXIDOREDUCTASE"/>
    <property type="match status" value="1"/>
</dbReference>
<dbReference type="Pfam" id="PF01541">
    <property type="entry name" value="GIY-YIG"/>
    <property type="match status" value="1"/>
</dbReference>
<dbReference type="Pfam" id="PF14520">
    <property type="entry name" value="HHH_5"/>
    <property type="match status" value="1"/>
</dbReference>
<dbReference type="Pfam" id="PF02151">
    <property type="entry name" value="UVR"/>
    <property type="match status" value="1"/>
</dbReference>
<dbReference type="Pfam" id="PF22920">
    <property type="entry name" value="UvrC_RNaseH"/>
    <property type="match status" value="1"/>
</dbReference>
<dbReference type="Pfam" id="PF08459">
    <property type="entry name" value="UvrC_RNaseH_dom"/>
    <property type="match status" value="1"/>
</dbReference>
<dbReference type="SMART" id="SM00465">
    <property type="entry name" value="GIYc"/>
    <property type="match status" value="1"/>
</dbReference>
<dbReference type="SUPFAM" id="SSF46600">
    <property type="entry name" value="C-terminal UvrC-binding domain of UvrB"/>
    <property type="match status" value="1"/>
</dbReference>
<dbReference type="SUPFAM" id="SSF82771">
    <property type="entry name" value="GIY-YIG endonuclease"/>
    <property type="match status" value="1"/>
</dbReference>
<dbReference type="SUPFAM" id="SSF47781">
    <property type="entry name" value="RuvA domain 2-like"/>
    <property type="match status" value="1"/>
</dbReference>
<dbReference type="PROSITE" id="PS50164">
    <property type="entry name" value="GIY_YIG"/>
    <property type="match status" value="1"/>
</dbReference>
<dbReference type="PROSITE" id="PS50151">
    <property type="entry name" value="UVR"/>
    <property type="match status" value="1"/>
</dbReference>
<dbReference type="PROSITE" id="PS50165">
    <property type="entry name" value="UVRC"/>
    <property type="match status" value="1"/>
</dbReference>